<dbReference type="EMBL" id="AC079888">
    <property type="protein sequence ID" value="AAM93694.1"/>
    <property type="status" value="ALT_SEQ"/>
    <property type="molecule type" value="Genomic_DNA"/>
</dbReference>
<dbReference type="EMBL" id="AP008216">
    <property type="protein sequence ID" value="BAF26890.1"/>
    <property type="status" value="ALT_SEQ"/>
    <property type="molecule type" value="Genomic_DNA"/>
</dbReference>
<dbReference type="EMBL" id="AP014966">
    <property type="protein sequence ID" value="BAT11515.1"/>
    <property type="status" value="ALT_SEQ"/>
    <property type="molecule type" value="Genomic_DNA"/>
</dbReference>
<dbReference type="FunCoup" id="Q0IWM5">
    <property type="interactions" value="350"/>
</dbReference>
<dbReference type="STRING" id="39947.Q0IWM5"/>
<dbReference type="PaxDb" id="39947-Q0IWM5"/>
<dbReference type="KEGG" id="dosa:Os10g0499600"/>
<dbReference type="KEGG" id="osa:4349027"/>
<dbReference type="InParanoid" id="Q0IWM5"/>
<dbReference type="OrthoDB" id="9970474at2759"/>
<dbReference type="Proteomes" id="UP000000763">
    <property type="component" value="Chromosome 10"/>
</dbReference>
<dbReference type="Proteomes" id="UP000059680">
    <property type="component" value="Chromosome 10"/>
</dbReference>
<dbReference type="Gene3D" id="2.40.400.10">
    <property type="entry name" value="Acetoacetate decarboxylase-like"/>
    <property type="match status" value="1"/>
</dbReference>
<dbReference type="InterPro" id="IPR023375">
    <property type="entry name" value="ADC_dom_sf"/>
</dbReference>
<dbReference type="InterPro" id="IPR039343">
    <property type="entry name" value="NDX1-like"/>
</dbReference>
<dbReference type="PANTHER" id="PTHR35467">
    <property type="match status" value="1"/>
</dbReference>
<dbReference type="PANTHER" id="PTHR35467:SF2">
    <property type="entry name" value="PROTEIN NEOXANTHIN-DEFICIENT 1"/>
    <property type="match status" value="1"/>
</dbReference>
<dbReference type="SUPFAM" id="SSF160104">
    <property type="entry name" value="Acetoacetate decarboxylase-like"/>
    <property type="match status" value="1"/>
</dbReference>
<comment type="function">
    <text evidence="1">Required for neoxanthin biosynthesis. Probably not involved directly in the enzymatic conversion of violaxanthin to neoxanthin. Is necessary but not sufficient for neoxanthin synthesis.</text>
</comment>
<comment type="sequence caution" evidence="2">
    <conflict type="erroneous gene model prediction">
        <sequence resource="EMBL-CDS" id="AAM93694"/>
    </conflict>
</comment>
<comment type="sequence caution" evidence="2">
    <conflict type="erroneous gene model prediction">
        <sequence resource="EMBL-CDS" id="BAF26890"/>
    </conflict>
</comment>
<comment type="sequence caution" evidence="2">
    <conflict type="erroneous gene model prediction">
        <sequence resource="EMBL-CDS" id="BAT11515"/>
    </conflict>
</comment>
<reference key="1">
    <citation type="journal article" date="2003" name="Science">
        <title>In-depth view of structure, activity, and evolution of rice chromosome 10.</title>
        <authorList>
            <person name="Yu Y."/>
            <person name="Rambo T."/>
            <person name="Currie J."/>
            <person name="Saski C."/>
            <person name="Kim H.-R."/>
            <person name="Collura K."/>
            <person name="Thompson S."/>
            <person name="Simmons J."/>
            <person name="Yang T.-J."/>
            <person name="Nah G."/>
            <person name="Patel A.J."/>
            <person name="Thurmond S."/>
            <person name="Henry D."/>
            <person name="Oates R."/>
            <person name="Palmer M."/>
            <person name="Pries G."/>
            <person name="Gibson J."/>
            <person name="Anderson H."/>
            <person name="Paradkar M."/>
            <person name="Crane L."/>
            <person name="Dale J."/>
            <person name="Carver M.B."/>
            <person name="Wood T."/>
            <person name="Frisch D."/>
            <person name="Engler F."/>
            <person name="Soderlund C."/>
            <person name="Palmer L.E."/>
            <person name="Teytelman L."/>
            <person name="Nascimento L."/>
            <person name="De la Bastide M."/>
            <person name="Spiegel L."/>
            <person name="Ware D."/>
            <person name="O'Shaughnessy A."/>
            <person name="Dike S."/>
            <person name="Dedhia N."/>
            <person name="Preston R."/>
            <person name="Huang E."/>
            <person name="Ferraro K."/>
            <person name="Kuit K."/>
            <person name="Miller B."/>
            <person name="Zutavern T."/>
            <person name="Katzenberger F."/>
            <person name="Muller S."/>
            <person name="Balija V."/>
            <person name="Martienssen R.A."/>
            <person name="Stein L."/>
            <person name="Minx P."/>
            <person name="Johnson D."/>
            <person name="Cordum H."/>
            <person name="Mardis E."/>
            <person name="Cheng Z."/>
            <person name="Jiang J."/>
            <person name="Wilson R."/>
            <person name="McCombie W.R."/>
            <person name="Wing R.A."/>
            <person name="Yuan Q."/>
            <person name="Ouyang S."/>
            <person name="Liu J."/>
            <person name="Jones K.M."/>
            <person name="Gansberger K."/>
            <person name="Moffat K."/>
            <person name="Hill J."/>
            <person name="Tsitrin T."/>
            <person name="Overton L."/>
            <person name="Bera J."/>
            <person name="Kim M."/>
            <person name="Jin S."/>
            <person name="Tallon L."/>
            <person name="Ciecko A."/>
            <person name="Pai G."/>
            <person name="Van Aken S."/>
            <person name="Utterback T."/>
            <person name="Reidmuller S."/>
            <person name="Bormann J."/>
            <person name="Feldblyum T."/>
            <person name="Hsiao J."/>
            <person name="Zismann V."/>
            <person name="Blunt S."/>
            <person name="de Vazeille A.R."/>
            <person name="Shaffer T."/>
            <person name="Koo H."/>
            <person name="Suh B."/>
            <person name="Yang Q."/>
            <person name="Haas B."/>
            <person name="Peterson J."/>
            <person name="Pertea M."/>
            <person name="Volfovsky N."/>
            <person name="Wortman J."/>
            <person name="White O."/>
            <person name="Salzberg S.L."/>
            <person name="Fraser C.M."/>
            <person name="Buell C.R."/>
            <person name="Messing J."/>
            <person name="Song R."/>
            <person name="Fuks G."/>
            <person name="Llaca V."/>
            <person name="Kovchak S."/>
            <person name="Young S."/>
            <person name="Bowers J.E."/>
            <person name="Paterson A.H."/>
            <person name="Johns M.A."/>
            <person name="Mao L."/>
            <person name="Pan H."/>
            <person name="Dean R.A."/>
        </authorList>
    </citation>
    <scope>NUCLEOTIDE SEQUENCE [LARGE SCALE GENOMIC DNA]</scope>
    <source>
        <strain>cv. Nipponbare</strain>
    </source>
</reference>
<reference key="2">
    <citation type="journal article" date="2005" name="Nature">
        <title>The map-based sequence of the rice genome.</title>
        <authorList>
            <consortium name="International rice genome sequencing project (IRGSP)"/>
        </authorList>
    </citation>
    <scope>NUCLEOTIDE SEQUENCE [LARGE SCALE GENOMIC DNA]</scope>
    <source>
        <strain>cv. Nipponbare</strain>
    </source>
</reference>
<reference key="3">
    <citation type="journal article" date="2008" name="Nucleic Acids Res.">
        <title>The rice annotation project database (RAP-DB): 2008 update.</title>
        <authorList>
            <consortium name="The rice annotation project (RAP)"/>
        </authorList>
    </citation>
    <scope>GENOME REANNOTATION</scope>
    <source>
        <strain>cv. Nipponbare</strain>
    </source>
</reference>
<reference key="4">
    <citation type="journal article" date="2013" name="Rice">
        <title>Improvement of the Oryza sativa Nipponbare reference genome using next generation sequence and optical map data.</title>
        <authorList>
            <person name="Kawahara Y."/>
            <person name="de la Bastide M."/>
            <person name="Hamilton J.P."/>
            <person name="Kanamori H."/>
            <person name="McCombie W.R."/>
            <person name="Ouyang S."/>
            <person name="Schwartz D.C."/>
            <person name="Tanaka T."/>
            <person name="Wu J."/>
            <person name="Zhou S."/>
            <person name="Childs K.L."/>
            <person name="Davidson R.M."/>
            <person name="Lin H."/>
            <person name="Quesada-Ocampo L."/>
            <person name="Vaillancourt B."/>
            <person name="Sakai H."/>
            <person name="Lee S.S."/>
            <person name="Kim J."/>
            <person name="Numa H."/>
            <person name="Itoh T."/>
            <person name="Buell C.R."/>
            <person name="Matsumoto T."/>
        </authorList>
    </citation>
    <scope>GENOME REANNOTATION</scope>
    <source>
        <strain>cv. Nipponbare</strain>
    </source>
</reference>
<accession>Q0IWM5</accession>
<accession>A0A0P0XVU6</accession>
<accession>Q8LNG9</accession>
<proteinExistence type="inferred from homology"/>
<feature type="chain" id="PRO_0000435896" description="Protein NEOXANTHIN-DEFICIENT 1">
    <location>
        <begin position="1"/>
        <end position="302"/>
    </location>
</feature>
<evidence type="ECO:0000250" key="1">
    <source>
        <dbReference type="UniProtKB" id="Q8GWB2"/>
    </source>
</evidence>
<evidence type="ECO:0000305" key="2"/>
<evidence type="ECO:0000312" key="3">
    <source>
        <dbReference type="EMBL" id="AAM93694.1"/>
    </source>
</evidence>
<evidence type="ECO:0000312" key="4">
    <source>
        <dbReference type="EMBL" id="BAF26890.1"/>
    </source>
</evidence>
<organism>
    <name type="scientific">Oryza sativa subsp. japonica</name>
    <name type="common">Rice</name>
    <dbReference type="NCBI Taxonomy" id="39947"/>
    <lineage>
        <taxon>Eukaryota</taxon>
        <taxon>Viridiplantae</taxon>
        <taxon>Streptophyta</taxon>
        <taxon>Embryophyta</taxon>
        <taxon>Tracheophyta</taxon>
        <taxon>Spermatophyta</taxon>
        <taxon>Magnoliopsida</taxon>
        <taxon>Liliopsida</taxon>
        <taxon>Poales</taxon>
        <taxon>Poaceae</taxon>
        <taxon>BOP clade</taxon>
        <taxon>Oryzoideae</taxon>
        <taxon>Oryzeae</taxon>
        <taxon>Oryzinae</taxon>
        <taxon>Oryza</taxon>
        <taxon>Oryza sativa</taxon>
    </lineage>
</organism>
<name>NDX1_ORYSJ</name>
<gene>
    <name evidence="2" type="primary">NDX1</name>
    <name evidence="4" type="ordered locus">Os10g0499600</name>
    <name evidence="3" type="ORF">OSJNBa0078O01.15</name>
</gene>
<sequence>MAAGSGREEAAAAAGYGRGPPWVFRGRALYQLHLVKAATARAFVPRELRLVEAFGYTLGGMFLARYDDSPAGKFDELVVIAGIVWNPPTSCAWAARVLVNSAEACRHGRKEVGLPSHVATFSQTEADALRNKPLVKSNSFLSLLGMRSTVSNQGNDREIEISETKGSCTRHLCNISVPLTGSHKHKWMGPAIRMSLPSFSGQIEDHPDLLKYSCQVECRVRPVRPAKIWRPRITEPQECPDGKISSKGSEVLAEPDAQKHTVMVLLSKPILALEFNSLEMHVDAPKIVIPHSKKKEVRYSST</sequence>
<protein>
    <recommendedName>
        <fullName evidence="2">Protein NEOXANTHIN-DEFICIENT 1</fullName>
    </recommendedName>
</protein>
<keyword id="KW-1185">Reference proteome</keyword>